<protein>
    <recommendedName>
        <fullName evidence="1">tRNA (guanine-N(1)-)-methyltransferase</fullName>
        <ecNumber evidence="1">2.1.1.228</ecNumber>
    </recommendedName>
    <alternativeName>
        <fullName evidence="1">M1G-methyltransferase</fullName>
    </alternativeName>
    <alternativeName>
        <fullName evidence="1">tRNA [GM37] methyltransferase</fullName>
    </alternativeName>
</protein>
<reference key="1">
    <citation type="journal article" date="2004" name="Proc. Natl. Acad. Sci. U.S.A.">
        <title>Genomic plasticity of the causative agent of melioidosis, Burkholderia pseudomallei.</title>
        <authorList>
            <person name="Holden M.T.G."/>
            <person name="Titball R.W."/>
            <person name="Peacock S.J."/>
            <person name="Cerdeno-Tarraga A.-M."/>
            <person name="Atkins T."/>
            <person name="Crossman L.C."/>
            <person name="Pitt T."/>
            <person name="Churcher C."/>
            <person name="Mungall K.L."/>
            <person name="Bentley S.D."/>
            <person name="Sebaihia M."/>
            <person name="Thomson N.R."/>
            <person name="Bason N."/>
            <person name="Beacham I.R."/>
            <person name="Brooks K."/>
            <person name="Brown K.A."/>
            <person name="Brown N.F."/>
            <person name="Challis G.L."/>
            <person name="Cherevach I."/>
            <person name="Chillingworth T."/>
            <person name="Cronin A."/>
            <person name="Crossett B."/>
            <person name="Davis P."/>
            <person name="DeShazer D."/>
            <person name="Feltwell T."/>
            <person name="Fraser A."/>
            <person name="Hance Z."/>
            <person name="Hauser H."/>
            <person name="Holroyd S."/>
            <person name="Jagels K."/>
            <person name="Keith K.E."/>
            <person name="Maddison M."/>
            <person name="Moule S."/>
            <person name="Price C."/>
            <person name="Quail M.A."/>
            <person name="Rabbinowitsch E."/>
            <person name="Rutherford K."/>
            <person name="Sanders M."/>
            <person name="Simmonds M."/>
            <person name="Songsivilai S."/>
            <person name="Stevens K."/>
            <person name="Tumapa S."/>
            <person name="Vesaratchavest M."/>
            <person name="Whitehead S."/>
            <person name="Yeats C."/>
            <person name="Barrell B.G."/>
            <person name="Oyston P.C.F."/>
            <person name="Parkhill J."/>
        </authorList>
    </citation>
    <scope>NUCLEOTIDE SEQUENCE [LARGE SCALE GENOMIC DNA]</scope>
    <source>
        <strain>K96243</strain>
    </source>
</reference>
<accession>Q63S32</accession>
<name>TRMD_BURPS</name>
<proteinExistence type="inferred from homology"/>
<sequence>MDEATQSAIQFDVVTLFPEMFRALTDWGITSRAVKQGRFGLRTWNPRDFTTDNYRTVDDRPYGGGPGMVMLAKPLEAAIGAAKAAQAAQGVATSRVVMMSPQGAPLTHERVARMAAEPGVVLLCGRYEAIDQRLIDRCVDEELSLGDFVLSGGELPAMALMDAVVRLLPGVLNDAQSAVQDSFADGLLDCPHYTRPEEYEGVRVPDVLLGGHHAEIERWRRQEALRNTIAKRPDLIARARREKLLSRADEAWLASLAKEAKQAS</sequence>
<feature type="chain" id="PRO_0000060349" description="tRNA (guanine-N(1)-)-methyltransferase">
    <location>
        <begin position="1"/>
        <end position="264"/>
    </location>
</feature>
<feature type="binding site" evidence="1">
    <location>
        <position position="125"/>
    </location>
    <ligand>
        <name>S-adenosyl-L-methionine</name>
        <dbReference type="ChEBI" id="CHEBI:59789"/>
    </ligand>
</feature>
<feature type="binding site" evidence="1">
    <location>
        <begin position="145"/>
        <end position="150"/>
    </location>
    <ligand>
        <name>S-adenosyl-L-methionine</name>
        <dbReference type="ChEBI" id="CHEBI:59789"/>
    </ligand>
</feature>
<gene>
    <name evidence="1" type="primary">trmD</name>
    <name type="ordered locus">BPSL2490</name>
</gene>
<comment type="function">
    <text evidence="1">Specifically methylates guanosine-37 in various tRNAs.</text>
</comment>
<comment type="catalytic activity">
    <reaction evidence="1">
        <text>guanosine(37) in tRNA + S-adenosyl-L-methionine = N(1)-methylguanosine(37) in tRNA + S-adenosyl-L-homocysteine + H(+)</text>
        <dbReference type="Rhea" id="RHEA:36899"/>
        <dbReference type="Rhea" id="RHEA-COMP:10145"/>
        <dbReference type="Rhea" id="RHEA-COMP:10147"/>
        <dbReference type="ChEBI" id="CHEBI:15378"/>
        <dbReference type="ChEBI" id="CHEBI:57856"/>
        <dbReference type="ChEBI" id="CHEBI:59789"/>
        <dbReference type="ChEBI" id="CHEBI:73542"/>
        <dbReference type="ChEBI" id="CHEBI:74269"/>
        <dbReference type="EC" id="2.1.1.228"/>
    </reaction>
</comment>
<comment type="subunit">
    <text evidence="1">Homodimer.</text>
</comment>
<comment type="subcellular location">
    <subcellularLocation>
        <location evidence="1">Cytoplasm</location>
    </subcellularLocation>
</comment>
<comment type="similarity">
    <text evidence="1">Belongs to the RNA methyltransferase TrmD family.</text>
</comment>
<evidence type="ECO:0000255" key="1">
    <source>
        <dbReference type="HAMAP-Rule" id="MF_00605"/>
    </source>
</evidence>
<organism>
    <name type="scientific">Burkholderia pseudomallei (strain K96243)</name>
    <dbReference type="NCBI Taxonomy" id="272560"/>
    <lineage>
        <taxon>Bacteria</taxon>
        <taxon>Pseudomonadati</taxon>
        <taxon>Pseudomonadota</taxon>
        <taxon>Betaproteobacteria</taxon>
        <taxon>Burkholderiales</taxon>
        <taxon>Burkholderiaceae</taxon>
        <taxon>Burkholderia</taxon>
        <taxon>pseudomallei group</taxon>
    </lineage>
</organism>
<keyword id="KW-0963">Cytoplasm</keyword>
<keyword id="KW-0489">Methyltransferase</keyword>
<keyword id="KW-1185">Reference proteome</keyword>
<keyword id="KW-0949">S-adenosyl-L-methionine</keyword>
<keyword id="KW-0808">Transferase</keyword>
<keyword id="KW-0819">tRNA processing</keyword>
<dbReference type="EC" id="2.1.1.228" evidence="1"/>
<dbReference type="EMBL" id="BX571965">
    <property type="protein sequence ID" value="CAH36496.1"/>
    <property type="molecule type" value="Genomic_DNA"/>
</dbReference>
<dbReference type="RefSeq" id="WP_004189914.1">
    <property type="nucleotide sequence ID" value="NZ_CP009538.1"/>
</dbReference>
<dbReference type="RefSeq" id="YP_109085.1">
    <property type="nucleotide sequence ID" value="NC_006350.1"/>
</dbReference>
<dbReference type="SMR" id="Q63S32"/>
<dbReference type="STRING" id="272560.BPSL2490"/>
<dbReference type="GeneID" id="93061077"/>
<dbReference type="KEGG" id="bps:BPSL2490"/>
<dbReference type="PATRIC" id="fig|272560.51.peg.2892"/>
<dbReference type="eggNOG" id="COG0336">
    <property type="taxonomic scope" value="Bacteria"/>
</dbReference>
<dbReference type="Proteomes" id="UP000000605">
    <property type="component" value="Chromosome 1"/>
</dbReference>
<dbReference type="GO" id="GO:0005829">
    <property type="term" value="C:cytosol"/>
    <property type="evidence" value="ECO:0007669"/>
    <property type="project" value="TreeGrafter"/>
</dbReference>
<dbReference type="GO" id="GO:0052906">
    <property type="term" value="F:tRNA (guanine(37)-N1)-methyltransferase activity"/>
    <property type="evidence" value="ECO:0007669"/>
    <property type="project" value="UniProtKB-UniRule"/>
</dbReference>
<dbReference type="GO" id="GO:0002939">
    <property type="term" value="P:tRNA N1-guanine methylation"/>
    <property type="evidence" value="ECO:0007669"/>
    <property type="project" value="TreeGrafter"/>
</dbReference>
<dbReference type="CDD" id="cd18080">
    <property type="entry name" value="TrmD-like"/>
    <property type="match status" value="1"/>
</dbReference>
<dbReference type="FunFam" id="1.10.1270.20:FF:000001">
    <property type="entry name" value="tRNA (guanine-N(1)-)-methyltransferase"/>
    <property type="match status" value="1"/>
</dbReference>
<dbReference type="FunFam" id="3.40.1280.10:FF:000001">
    <property type="entry name" value="tRNA (guanine-N(1)-)-methyltransferase"/>
    <property type="match status" value="1"/>
</dbReference>
<dbReference type="Gene3D" id="3.40.1280.10">
    <property type="match status" value="1"/>
</dbReference>
<dbReference type="Gene3D" id="1.10.1270.20">
    <property type="entry name" value="tRNA(m1g37)methyltransferase, domain 2"/>
    <property type="match status" value="1"/>
</dbReference>
<dbReference type="HAMAP" id="MF_00605">
    <property type="entry name" value="TrmD"/>
    <property type="match status" value="1"/>
</dbReference>
<dbReference type="InterPro" id="IPR029028">
    <property type="entry name" value="Alpha/beta_knot_MTases"/>
</dbReference>
<dbReference type="InterPro" id="IPR023148">
    <property type="entry name" value="tRNA_m1G_MeTrfase_C_sf"/>
</dbReference>
<dbReference type="InterPro" id="IPR002649">
    <property type="entry name" value="tRNA_m1G_MeTrfase_TrmD"/>
</dbReference>
<dbReference type="InterPro" id="IPR029026">
    <property type="entry name" value="tRNA_m1G_MTases_N"/>
</dbReference>
<dbReference type="InterPro" id="IPR016009">
    <property type="entry name" value="tRNA_MeTrfase_TRMD/TRM10"/>
</dbReference>
<dbReference type="NCBIfam" id="NF000648">
    <property type="entry name" value="PRK00026.1"/>
    <property type="match status" value="1"/>
</dbReference>
<dbReference type="NCBIfam" id="TIGR00088">
    <property type="entry name" value="trmD"/>
    <property type="match status" value="1"/>
</dbReference>
<dbReference type="PANTHER" id="PTHR46417">
    <property type="entry name" value="TRNA (GUANINE-N(1)-)-METHYLTRANSFERASE"/>
    <property type="match status" value="1"/>
</dbReference>
<dbReference type="PANTHER" id="PTHR46417:SF1">
    <property type="entry name" value="TRNA (GUANINE-N(1)-)-METHYLTRANSFERASE"/>
    <property type="match status" value="1"/>
</dbReference>
<dbReference type="Pfam" id="PF01746">
    <property type="entry name" value="tRNA_m1G_MT"/>
    <property type="match status" value="1"/>
</dbReference>
<dbReference type="PIRSF" id="PIRSF000386">
    <property type="entry name" value="tRNA_mtase"/>
    <property type="match status" value="1"/>
</dbReference>
<dbReference type="SUPFAM" id="SSF75217">
    <property type="entry name" value="alpha/beta knot"/>
    <property type="match status" value="1"/>
</dbReference>